<name>FIXX_SHIFL</name>
<evidence type="ECO:0000250" key="1"/>
<evidence type="ECO:0000305" key="2"/>
<dbReference type="EMBL" id="AE005674">
    <property type="protein sequence ID" value="AAN41707.1"/>
    <property type="molecule type" value="Genomic_DNA"/>
</dbReference>
<dbReference type="EMBL" id="AE014073">
    <property type="protein sequence ID" value="AAP15587.1"/>
    <property type="molecule type" value="Genomic_DNA"/>
</dbReference>
<dbReference type="RefSeq" id="NP_706000.1">
    <property type="nucleotide sequence ID" value="NC_004337.2"/>
</dbReference>
<dbReference type="RefSeq" id="WP_000203747.1">
    <property type="nucleotide sequence ID" value="NZ_WPGW01000005.1"/>
</dbReference>
<dbReference type="SMR" id="Q83SQ6"/>
<dbReference type="STRING" id="198214.SF0041"/>
<dbReference type="PaxDb" id="198214-SF0041"/>
<dbReference type="GeneID" id="1024565"/>
<dbReference type="GeneID" id="75203971"/>
<dbReference type="KEGG" id="sfl:SF0041"/>
<dbReference type="KEGG" id="sfx:S0043"/>
<dbReference type="PATRIC" id="fig|198214.7.peg.49"/>
<dbReference type="HOGENOM" id="CLU_163428_1_0_6"/>
<dbReference type="Proteomes" id="UP000001006">
    <property type="component" value="Chromosome"/>
</dbReference>
<dbReference type="Proteomes" id="UP000002673">
    <property type="component" value="Chromosome"/>
</dbReference>
<dbReference type="GO" id="GO:0051539">
    <property type="term" value="F:4 iron, 4 sulfur cluster binding"/>
    <property type="evidence" value="ECO:0007669"/>
    <property type="project" value="UniProtKB-KW"/>
</dbReference>
<dbReference type="GO" id="GO:0005506">
    <property type="term" value="F:iron ion binding"/>
    <property type="evidence" value="ECO:0007669"/>
    <property type="project" value="InterPro"/>
</dbReference>
<dbReference type="Gene3D" id="3.30.70.20">
    <property type="match status" value="1"/>
</dbReference>
<dbReference type="InterPro" id="IPR012206">
    <property type="entry name" value="Fd_FixX"/>
</dbReference>
<dbReference type="NCBIfam" id="NF011993">
    <property type="entry name" value="PRK15449.1"/>
    <property type="match status" value="1"/>
</dbReference>
<dbReference type="PANTHER" id="PTHR43082">
    <property type="entry name" value="FERREDOXIN-LIKE"/>
    <property type="match status" value="1"/>
</dbReference>
<dbReference type="PANTHER" id="PTHR43082:SF1">
    <property type="entry name" value="FERREDOXIN-LIKE PROTEIN FIXX-RELATED"/>
    <property type="match status" value="1"/>
</dbReference>
<dbReference type="PIRSF" id="PIRSF036548">
    <property type="entry name" value="Fdx_FixX"/>
    <property type="match status" value="1"/>
</dbReference>
<dbReference type="SUPFAM" id="SSF54862">
    <property type="entry name" value="4Fe-4S ferredoxins"/>
    <property type="match status" value="1"/>
</dbReference>
<keyword id="KW-0004">4Fe-4S</keyword>
<keyword id="KW-0249">Electron transport</keyword>
<keyword id="KW-0408">Iron</keyword>
<keyword id="KW-0411">Iron-sulfur</keyword>
<keyword id="KW-0479">Metal-binding</keyword>
<keyword id="KW-1185">Reference proteome</keyword>
<keyword id="KW-0813">Transport</keyword>
<accession>Q83SQ6</accession>
<accession>Q7C3B8</accession>
<sequence length="95" mass="10507">MTSPVNVDVKLGVNKFNVDEEHPHIVVKADADKQVLELLVKACPAGLYKKQDDGSVRFDYAGCLECGTCRILGLGSALEQWEYPRGTFGVEFRYG</sequence>
<reference key="1">
    <citation type="journal article" date="2002" name="Nucleic Acids Res.">
        <title>Genome sequence of Shigella flexneri 2a: insights into pathogenicity through comparison with genomes of Escherichia coli K12 and O157.</title>
        <authorList>
            <person name="Jin Q."/>
            <person name="Yuan Z."/>
            <person name="Xu J."/>
            <person name="Wang Y."/>
            <person name="Shen Y."/>
            <person name="Lu W."/>
            <person name="Wang J."/>
            <person name="Liu H."/>
            <person name="Yang J."/>
            <person name="Yang F."/>
            <person name="Zhang X."/>
            <person name="Zhang J."/>
            <person name="Yang G."/>
            <person name="Wu H."/>
            <person name="Qu D."/>
            <person name="Dong J."/>
            <person name="Sun L."/>
            <person name="Xue Y."/>
            <person name="Zhao A."/>
            <person name="Gao Y."/>
            <person name="Zhu J."/>
            <person name="Kan B."/>
            <person name="Ding K."/>
            <person name="Chen S."/>
            <person name="Cheng H."/>
            <person name="Yao Z."/>
            <person name="He B."/>
            <person name="Chen R."/>
            <person name="Ma D."/>
            <person name="Qiang B."/>
            <person name="Wen Y."/>
            <person name="Hou Y."/>
            <person name="Yu J."/>
        </authorList>
    </citation>
    <scope>NUCLEOTIDE SEQUENCE [LARGE SCALE GENOMIC DNA]</scope>
    <source>
        <strain>301 / Serotype 2a</strain>
    </source>
</reference>
<reference key="2">
    <citation type="journal article" date="2003" name="Infect. Immun.">
        <title>Complete genome sequence and comparative genomics of Shigella flexneri serotype 2a strain 2457T.</title>
        <authorList>
            <person name="Wei J."/>
            <person name="Goldberg M.B."/>
            <person name="Burland V."/>
            <person name="Venkatesan M.M."/>
            <person name="Deng W."/>
            <person name="Fournier G."/>
            <person name="Mayhew G.F."/>
            <person name="Plunkett G. III"/>
            <person name="Rose D.J."/>
            <person name="Darling A."/>
            <person name="Mau B."/>
            <person name="Perna N.T."/>
            <person name="Payne S.M."/>
            <person name="Runyen-Janecky L.J."/>
            <person name="Zhou S."/>
            <person name="Schwartz D.C."/>
            <person name="Blattner F.R."/>
        </authorList>
    </citation>
    <scope>NUCLEOTIDE SEQUENCE [LARGE SCALE GENOMIC DNA]</scope>
    <source>
        <strain>ATCC 700930 / 2457T / Serotype 2a</strain>
    </source>
</reference>
<comment type="function">
    <text evidence="1">Could be part of an electron transfer system required for anaerobic carnitine reduction. Could be a 3Fe-4S cluster-containing protein (By similarity).</text>
</comment>
<comment type="similarity">
    <text evidence="2">Belongs to the bacterial-type ferredoxin family. FixX subfamily.</text>
</comment>
<proteinExistence type="inferred from homology"/>
<gene>
    <name type="primary">fixX</name>
    <name type="ordered locus">SF0041</name>
    <name type="ordered locus">S0043</name>
</gene>
<feature type="chain" id="PRO_0000159217" description="Ferredoxin-like protein FixX">
    <location>
        <begin position="1"/>
        <end position="95"/>
    </location>
</feature>
<organism>
    <name type="scientific">Shigella flexneri</name>
    <dbReference type="NCBI Taxonomy" id="623"/>
    <lineage>
        <taxon>Bacteria</taxon>
        <taxon>Pseudomonadati</taxon>
        <taxon>Pseudomonadota</taxon>
        <taxon>Gammaproteobacteria</taxon>
        <taxon>Enterobacterales</taxon>
        <taxon>Enterobacteriaceae</taxon>
        <taxon>Shigella</taxon>
    </lineage>
</organism>
<protein>
    <recommendedName>
        <fullName>Ferredoxin-like protein FixX</fullName>
    </recommendedName>
</protein>